<evidence type="ECO:0000255" key="1">
    <source>
        <dbReference type="HAMAP-Rule" id="MF_01031"/>
    </source>
</evidence>
<proteinExistence type="inferred from homology"/>
<organism>
    <name type="scientific">Acinetobacter baylyi (strain ATCC 33305 / BD413 / ADP1)</name>
    <dbReference type="NCBI Taxonomy" id="62977"/>
    <lineage>
        <taxon>Bacteria</taxon>
        <taxon>Pseudomonadati</taxon>
        <taxon>Pseudomonadota</taxon>
        <taxon>Gammaproteobacteria</taxon>
        <taxon>Moraxellales</taxon>
        <taxon>Moraxellaceae</taxon>
        <taxon>Acinetobacter</taxon>
    </lineage>
</organism>
<protein>
    <recommendedName>
        <fullName evidence="1">3-isopropylmalate dehydratase small subunit</fullName>
        <ecNumber evidence="1">4.2.1.33</ecNumber>
    </recommendedName>
    <alternativeName>
        <fullName evidence="1">Alpha-IPM isomerase</fullName>
        <shortName evidence="1">IPMI</shortName>
    </alternativeName>
    <alternativeName>
        <fullName evidence="1">Isopropylmalate isomerase</fullName>
    </alternativeName>
</protein>
<keyword id="KW-0028">Amino-acid biosynthesis</keyword>
<keyword id="KW-0100">Branched-chain amino acid biosynthesis</keyword>
<keyword id="KW-0432">Leucine biosynthesis</keyword>
<keyword id="KW-0456">Lyase</keyword>
<comment type="function">
    <text evidence="1">Catalyzes the isomerization between 2-isopropylmalate and 3-isopropylmalate, via the formation of 2-isopropylmaleate.</text>
</comment>
<comment type="catalytic activity">
    <reaction evidence="1">
        <text>(2R,3S)-3-isopropylmalate = (2S)-2-isopropylmalate</text>
        <dbReference type="Rhea" id="RHEA:32287"/>
        <dbReference type="ChEBI" id="CHEBI:1178"/>
        <dbReference type="ChEBI" id="CHEBI:35121"/>
        <dbReference type="EC" id="4.2.1.33"/>
    </reaction>
</comment>
<comment type="pathway">
    <text evidence="1">Amino-acid biosynthesis; L-leucine biosynthesis; L-leucine from 3-methyl-2-oxobutanoate: step 2/4.</text>
</comment>
<comment type="subunit">
    <text evidence="1">Heterodimer of LeuC and LeuD.</text>
</comment>
<comment type="similarity">
    <text evidence="1">Belongs to the LeuD family. LeuD type 1 subfamily.</text>
</comment>
<feature type="chain" id="PRO_0000141770" description="3-isopropylmalate dehydratase small subunit">
    <location>
        <begin position="1"/>
        <end position="216"/>
    </location>
</feature>
<reference key="1">
    <citation type="journal article" date="2004" name="Nucleic Acids Res.">
        <title>Unique features revealed by the genome sequence of Acinetobacter sp. ADP1, a versatile and naturally transformation competent bacterium.</title>
        <authorList>
            <person name="Barbe V."/>
            <person name="Vallenet D."/>
            <person name="Fonknechten N."/>
            <person name="Kreimeyer A."/>
            <person name="Oztas S."/>
            <person name="Labarre L."/>
            <person name="Cruveiller S."/>
            <person name="Robert C."/>
            <person name="Duprat S."/>
            <person name="Wincker P."/>
            <person name="Ornston L.N."/>
            <person name="Weissenbach J."/>
            <person name="Marliere P."/>
            <person name="Cohen G.N."/>
            <person name="Medigue C."/>
        </authorList>
    </citation>
    <scope>NUCLEOTIDE SEQUENCE [LARGE SCALE GENOMIC DNA]</scope>
    <source>
        <strain>ATCC 33305 / BD413 / ADP1</strain>
    </source>
</reference>
<gene>
    <name evidence="1" type="primary">leuD</name>
    <name type="ordered locus">ACIAD0466</name>
</gene>
<sequence length="216" mass="24339">MKAYTVEQGIVAPLDRANVDTDLIIPKQFLKSIKRTGFGDNLFDELRYLDEGYPGQDNAKRPKNPDFILNQPCYASATVLIARKNFGCGSSREHAPWALNEYGFRTVIAPSFADIFFNNCFKNGMLPVILDEETVDQLFKECAASEDYQLTIDLAAQEVKTPTGEAFKFEIDPFRKHCLLNGLDDIGLTLQNAGAIREFESKAKQSRPWVFQDLKA</sequence>
<accession>Q6FEV8</accession>
<name>LEUD_ACIAD</name>
<dbReference type="EC" id="4.2.1.33" evidence="1"/>
<dbReference type="EMBL" id="CR543861">
    <property type="protein sequence ID" value="CAG67400.1"/>
    <property type="molecule type" value="Genomic_DNA"/>
</dbReference>
<dbReference type="RefSeq" id="WP_004920234.1">
    <property type="nucleotide sequence ID" value="NC_005966.1"/>
</dbReference>
<dbReference type="SMR" id="Q6FEV8"/>
<dbReference type="STRING" id="202950.GCA_001485005_00714"/>
<dbReference type="GeneID" id="45232955"/>
<dbReference type="KEGG" id="aci:ACIAD0466"/>
<dbReference type="eggNOG" id="COG0066">
    <property type="taxonomic scope" value="Bacteria"/>
</dbReference>
<dbReference type="HOGENOM" id="CLU_081378_0_3_6"/>
<dbReference type="OrthoDB" id="9777465at2"/>
<dbReference type="BioCyc" id="ASP62977:ACIAD_RS02135-MONOMER"/>
<dbReference type="UniPathway" id="UPA00048">
    <property type="reaction ID" value="UER00071"/>
</dbReference>
<dbReference type="Proteomes" id="UP000000430">
    <property type="component" value="Chromosome"/>
</dbReference>
<dbReference type="GO" id="GO:0009316">
    <property type="term" value="C:3-isopropylmalate dehydratase complex"/>
    <property type="evidence" value="ECO:0007669"/>
    <property type="project" value="InterPro"/>
</dbReference>
<dbReference type="GO" id="GO:0003861">
    <property type="term" value="F:3-isopropylmalate dehydratase activity"/>
    <property type="evidence" value="ECO:0007669"/>
    <property type="project" value="UniProtKB-UniRule"/>
</dbReference>
<dbReference type="GO" id="GO:0009098">
    <property type="term" value="P:L-leucine biosynthetic process"/>
    <property type="evidence" value="ECO:0007669"/>
    <property type="project" value="UniProtKB-UniRule"/>
</dbReference>
<dbReference type="CDD" id="cd01577">
    <property type="entry name" value="IPMI_Swivel"/>
    <property type="match status" value="1"/>
</dbReference>
<dbReference type="FunFam" id="3.20.19.10:FF:000003">
    <property type="entry name" value="3-isopropylmalate dehydratase small subunit"/>
    <property type="match status" value="1"/>
</dbReference>
<dbReference type="Gene3D" id="3.20.19.10">
    <property type="entry name" value="Aconitase, domain 4"/>
    <property type="match status" value="1"/>
</dbReference>
<dbReference type="HAMAP" id="MF_01031">
    <property type="entry name" value="LeuD_type1"/>
    <property type="match status" value="1"/>
</dbReference>
<dbReference type="InterPro" id="IPR004431">
    <property type="entry name" value="3-IsopropMal_deHydase_ssu"/>
</dbReference>
<dbReference type="InterPro" id="IPR015928">
    <property type="entry name" value="Aconitase/3IPM_dehydase_swvl"/>
</dbReference>
<dbReference type="InterPro" id="IPR000573">
    <property type="entry name" value="AconitaseA/IPMdHydase_ssu_swvl"/>
</dbReference>
<dbReference type="InterPro" id="IPR033940">
    <property type="entry name" value="IPMI_Swivel"/>
</dbReference>
<dbReference type="InterPro" id="IPR050075">
    <property type="entry name" value="LeuD"/>
</dbReference>
<dbReference type="NCBIfam" id="TIGR00171">
    <property type="entry name" value="leuD"/>
    <property type="match status" value="1"/>
</dbReference>
<dbReference type="NCBIfam" id="NF002458">
    <property type="entry name" value="PRK01641.1"/>
    <property type="match status" value="1"/>
</dbReference>
<dbReference type="PANTHER" id="PTHR43345:SF5">
    <property type="entry name" value="3-ISOPROPYLMALATE DEHYDRATASE SMALL SUBUNIT"/>
    <property type="match status" value="1"/>
</dbReference>
<dbReference type="PANTHER" id="PTHR43345">
    <property type="entry name" value="3-ISOPROPYLMALATE DEHYDRATASE SMALL SUBUNIT 2-RELATED-RELATED"/>
    <property type="match status" value="1"/>
</dbReference>
<dbReference type="Pfam" id="PF00694">
    <property type="entry name" value="Aconitase_C"/>
    <property type="match status" value="1"/>
</dbReference>
<dbReference type="SUPFAM" id="SSF52016">
    <property type="entry name" value="LeuD/IlvD-like"/>
    <property type="match status" value="1"/>
</dbReference>